<keyword id="KW-1003">Cell membrane</keyword>
<keyword id="KW-0961">Cell wall biogenesis/degradation</keyword>
<keyword id="KW-0328">Glycosyltransferase</keyword>
<keyword id="KW-0472">Membrane</keyword>
<keyword id="KW-1185">Reference proteome</keyword>
<keyword id="KW-0808">Transferase</keyword>
<keyword id="KW-0812">Transmembrane</keyword>
<keyword id="KW-1133">Transmembrane helix</keyword>
<dbReference type="EC" id="2.4.2.47"/>
<dbReference type="EMBL" id="AL123456">
    <property type="protein sequence ID" value="CCP45471.1"/>
    <property type="molecule type" value="Genomic_DNA"/>
</dbReference>
<dbReference type="PIR" id="E70968">
    <property type="entry name" value="E70968"/>
</dbReference>
<dbReference type="RefSeq" id="NP_217189.1">
    <property type="nucleotide sequence ID" value="NC_000962.3"/>
</dbReference>
<dbReference type="FunCoup" id="P9WMZ7">
    <property type="interactions" value="23"/>
</dbReference>
<dbReference type="STRING" id="83332.Rv2673"/>
<dbReference type="PaxDb" id="83332-Rv2673"/>
<dbReference type="DNASU" id="887396"/>
<dbReference type="GeneID" id="887396"/>
<dbReference type="KEGG" id="mtu:Rv2673"/>
<dbReference type="KEGG" id="mtv:RVBD_2673"/>
<dbReference type="TubercuList" id="Rv2673"/>
<dbReference type="eggNOG" id="ENOG5033U55">
    <property type="taxonomic scope" value="Bacteria"/>
</dbReference>
<dbReference type="InParanoid" id="P9WMZ7"/>
<dbReference type="OrthoDB" id="5175994at2"/>
<dbReference type="BioCyc" id="MetaCyc:G185E-6921-MONOMER"/>
<dbReference type="UniPathway" id="UPA00963"/>
<dbReference type="Proteomes" id="UP000001584">
    <property type="component" value="Chromosome"/>
</dbReference>
<dbReference type="GO" id="GO:0005886">
    <property type="term" value="C:plasma membrane"/>
    <property type="evidence" value="ECO:0007669"/>
    <property type="project" value="UniProtKB-SubCell"/>
</dbReference>
<dbReference type="GO" id="GO:0016758">
    <property type="term" value="F:hexosyltransferase activity"/>
    <property type="evidence" value="ECO:0007669"/>
    <property type="project" value="InterPro"/>
</dbReference>
<dbReference type="GO" id="GO:0045227">
    <property type="term" value="P:capsule polysaccharide biosynthetic process"/>
    <property type="evidence" value="ECO:0007669"/>
    <property type="project" value="UniProtKB-UniPathway"/>
</dbReference>
<dbReference type="GO" id="GO:0071555">
    <property type="term" value="P:cell wall organization"/>
    <property type="evidence" value="ECO:0007669"/>
    <property type="project" value="UniProtKB-KW"/>
</dbReference>
<dbReference type="InterPro" id="IPR018584">
    <property type="entry name" value="GT87"/>
</dbReference>
<dbReference type="Pfam" id="PF09594">
    <property type="entry name" value="GT87"/>
    <property type="match status" value="1"/>
</dbReference>
<reference key="1">
    <citation type="journal article" date="1998" name="Nature">
        <title>Deciphering the biology of Mycobacterium tuberculosis from the complete genome sequence.</title>
        <authorList>
            <person name="Cole S.T."/>
            <person name="Brosch R."/>
            <person name="Parkhill J."/>
            <person name="Garnier T."/>
            <person name="Churcher C.M."/>
            <person name="Harris D.E."/>
            <person name="Gordon S.V."/>
            <person name="Eiglmeier K."/>
            <person name="Gas S."/>
            <person name="Barry C.E. III"/>
            <person name="Tekaia F."/>
            <person name="Badcock K."/>
            <person name="Basham D."/>
            <person name="Brown D."/>
            <person name="Chillingworth T."/>
            <person name="Connor R."/>
            <person name="Davies R.M."/>
            <person name="Devlin K."/>
            <person name="Feltwell T."/>
            <person name="Gentles S."/>
            <person name="Hamlin N."/>
            <person name="Holroyd S."/>
            <person name="Hornsby T."/>
            <person name="Jagels K."/>
            <person name="Krogh A."/>
            <person name="McLean J."/>
            <person name="Moule S."/>
            <person name="Murphy L.D."/>
            <person name="Oliver S."/>
            <person name="Osborne J."/>
            <person name="Quail M.A."/>
            <person name="Rajandream M.A."/>
            <person name="Rogers J."/>
            <person name="Rutter S."/>
            <person name="Seeger K."/>
            <person name="Skelton S."/>
            <person name="Squares S."/>
            <person name="Squares R."/>
            <person name="Sulston J.E."/>
            <person name="Taylor K."/>
            <person name="Whitehead S."/>
            <person name="Barrell B.G."/>
        </authorList>
    </citation>
    <scope>NUCLEOTIDE SEQUENCE [LARGE SCALE GENOMIC DNA]</scope>
    <source>
        <strain>ATCC 25618 / H37Rv</strain>
    </source>
</reference>
<reference key="2">
    <citation type="journal article" date="2008" name="Mol. Microbiol.">
        <title>Biosynthesis of mycobacterial arabinogalactan: identification of a novel alpha(1--&gt;3) arabinofuranosyltransferase.</title>
        <authorList>
            <person name="Birch H.L."/>
            <person name="Alderwick L.J."/>
            <person name="Bhatt A."/>
            <person name="Rittmann D."/>
            <person name="Krumbach K."/>
            <person name="Singh A."/>
            <person name="Bai Y."/>
            <person name="Lowary T.L."/>
            <person name="Eggeling L."/>
            <person name="Besra G.S."/>
        </authorList>
    </citation>
    <scope>FUNCTION</scope>
    <scope>CATALYTIC ACTIVITY</scope>
    <scope>DISRUPTION PHENOTYPE</scope>
    <scope>NOMENCLATURE</scope>
</reference>
<reference key="3">
    <citation type="journal article" date="2011" name="ACS Chem. Biol.">
        <title>Reconstitution of functional mycobacterial arabinosyltransferase AftC proteoliposome and assessment of decaprenylphosphorylarabinose analogues as arabinofuranosyl donors.</title>
        <authorList>
            <person name="Zhang J."/>
            <person name="Angala S.K."/>
            <person name="Pramanik P.K."/>
            <person name="Li K."/>
            <person name="Crick D.C."/>
            <person name="Liav A."/>
            <person name="Jozwiak A."/>
            <person name="Swiezewska E."/>
            <person name="Jackson M."/>
            <person name="Chatterjee D."/>
        </authorList>
    </citation>
    <scope>FUNCTION</scope>
    <scope>CATALYTIC ACTIVITY</scope>
    <scope>SUBSTRATE SPECIFICITY</scope>
</reference>
<reference key="4">
    <citation type="journal article" date="2011" name="Mol. Cell. Proteomics">
        <title>Proteogenomic analysis of Mycobacterium tuberculosis by high resolution mass spectrometry.</title>
        <authorList>
            <person name="Kelkar D.S."/>
            <person name="Kumar D."/>
            <person name="Kumar P."/>
            <person name="Balakrishnan L."/>
            <person name="Muthusamy B."/>
            <person name="Yadav A.K."/>
            <person name="Shrivastava P."/>
            <person name="Marimuthu A."/>
            <person name="Anand S."/>
            <person name="Sundaram H."/>
            <person name="Kingsbury R."/>
            <person name="Harsha H.C."/>
            <person name="Nair B."/>
            <person name="Prasad T.S."/>
            <person name="Chauhan D.S."/>
            <person name="Katoch K."/>
            <person name="Katoch V.M."/>
            <person name="Kumar P."/>
            <person name="Chaerkady R."/>
            <person name="Ramachandran S."/>
            <person name="Dash D."/>
            <person name="Pandey A."/>
        </authorList>
    </citation>
    <scope>IDENTIFICATION BY MASS SPECTROMETRY [LARGE SCALE ANALYSIS]</scope>
    <source>
        <strain>ATCC 25618 / H37Rv</strain>
    </source>
</reference>
<gene>
    <name type="primary">aftC</name>
    <name type="ordered locus">Rv2673</name>
</gene>
<sequence length="433" mass="48915">MYGALVTAADSIRTGLGASLLAGFRPRTGAPSTATILRSALWPAAVLSVLHRSIVLTTNGNITDDFKPVYRAVLNFRRGWDIYNEHFDYVDPHYLYPPGGTLLMAPFGYLPFAPSRYLFISINTAAILVAAYLLLRMFNFTLTSVAAPALILAMFATETVTNTLVFTNINGCILLLEVLFLRWLLDGRASRQWCGGLAIGLTLVLKPLLGPLLLLPLLNRQWRALVAAVVVPVVVNVAALPLVSDPMSFFTRTLPYILGTRDYFNSSILGNGVYFGLPTWLILFLRILFTAITFGALWLLYRYYRTGDPLFWFTTSSGVLLLWSWLVMSLAQGYYSMMLFPFLMTVVLPNSVIRNWPAWLGVYGFMTLDRWLLFNWMRWGRALEYLKITYGWSLLLIVTFTVLYFRYLDAKADNRLDGGIDPAWLTPEREGQR</sequence>
<feature type="chain" id="PRO_0000420579" description="Alpha-(1-&gt;3)-arabinofuranosyltransferase">
    <location>
        <begin position="1"/>
        <end position="433"/>
    </location>
</feature>
<feature type="transmembrane region" description="Helical" evidence="1">
    <location>
        <begin position="118"/>
        <end position="138"/>
    </location>
</feature>
<feature type="transmembrane region" description="Helical" evidence="1">
    <location>
        <begin position="140"/>
        <end position="160"/>
    </location>
</feature>
<feature type="transmembrane region" description="Helical" evidence="1">
    <location>
        <begin position="164"/>
        <end position="184"/>
    </location>
</feature>
<feature type="transmembrane region" description="Helical" evidence="1">
    <location>
        <begin position="197"/>
        <end position="217"/>
    </location>
</feature>
<feature type="transmembrane region" description="Helical" evidence="1">
    <location>
        <begin position="224"/>
        <end position="244"/>
    </location>
</feature>
<feature type="transmembrane region" description="Helical" evidence="1">
    <location>
        <begin position="280"/>
        <end position="300"/>
    </location>
</feature>
<feature type="transmembrane region" description="Helical" evidence="1">
    <location>
        <begin position="310"/>
        <end position="330"/>
    </location>
</feature>
<feature type="transmembrane region" description="Helical" evidence="1">
    <location>
        <begin position="333"/>
        <end position="353"/>
    </location>
</feature>
<feature type="transmembrane region" description="Helical" evidence="1">
    <location>
        <begin position="356"/>
        <end position="376"/>
    </location>
</feature>
<feature type="transmembrane region" description="Helical" evidence="1">
    <location>
        <begin position="385"/>
        <end position="405"/>
    </location>
</feature>
<name>AFTC_MYCTU</name>
<comment type="function">
    <text evidence="2 3">Involved in the biosynthesis of the arabinogalactan (AG) region of the mycolylarabinogalactan-peptidoglycan (mAGP) complex, an essential component of the mycobacterial cell wall. Catalyzes the addition of an arabinofuranosyl (Araf) residue from the sugar donor decaprenyl-phospho-arabinose (DPA) on the C-3 of an alpha-(1-&gt;5)-linked Araf from the arabinan backbone of AG. It can also use (Z,Z)-farnesylphosphoryl D-arabinose (Z-FPA), and to a lesser extent (E,E,Z,Z,Z,Z)-heptaprenylphosphoryl D-arabinose (Z-HPA) and (Z)-nerylphosphoryl D-arabinose (Z-NPA) as sugar donors.</text>
</comment>
<comment type="catalytic activity">
    <reaction evidence="2 3">
        <text>Adds an alpha-D-arabinofuranosyl group from trans,octacis-decaprenylphospho-beta-D-arabinofuranose at the 3-O-position of an alpha-(1-&gt;5)-arabinofuranan chain attached to a beta-(1-&gt;5)-galactofuranan chain.</text>
        <dbReference type="EC" id="2.4.2.47"/>
    </reaction>
</comment>
<comment type="pathway">
    <text>Cell wall biogenesis; cell wall polysaccharide biosynthesis.</text>
</comment>
<comment type="subcellular location">
    <subcellularLocation>
        <location evidence="1">Cell membrane</location>
        <topology evidence="1">Multi-pass membrane protein</topology>
    </subcellularLocation>
</comment>
<comment type="disruption phenotype">
    <text evidence="2">Cells lacking this gene result in an increased permeability and an altered cell wall.</text>
</comment>
<comment type="similarity">
    <text evidence="4">Belongs to the glycosyltransferase 87 family.</text>
</comment>
<evidence type="ECO:0000255" key="1"/>
<evidence type="ECO:0000269" key="2">
    <source>
    </source>
</evidence>
<evidence type="ECO:0000269" key="3">
    <source>
    </source>
</evidence>
<evidence type="ECO:0000305" key="4"/>
<protein>
    <recommendedName>
        <fullName>Alpha-(1-&gt;3)-arabinofuranosyltransferase</fullName>
        <ecNumber>2.4.2.47</ecNumber>
    </recommendedName>
    <alternativeName>
        <fullName>Arabinofuranan 3-O-arabinosyltransferase</fullName>
    </alternativeName>
    <alternativeName>
        <fullName>Arabinofuranosyltransferase C</fullName>
    </alternativeName>
</protein>
<organism>
    <name type="scientific">Mycobacterium tuberculosis (strain ATCC 25618 / H37Rv)</name>
    <dbReference type="NCBI Taxonomy" id="83332"/>
    <lineage>
        <taxon>Bacteria</taxon>
        <taxon>Bacillati</taxon>
        <taxon>Actinomycetota</taxon>
        <taxon>Actinomycetes</taxon>
        <taxon>Mycobacteriales</taxon>
        <taxon>Mycobacteriaceae</taxon>
        <taxon>Mycobacterium</taxon>
        <taxon>Mycobacterium tuberculosis complex</taxon>
    </lineage>
</organism>
<proteinExistence type="evidence at protein level"/>
<accession>P9WMZ7</accession>
<accession>F2GLI3</accession>
<accession>L0TAJ6</accession>
<accession>P71970</accession>
<accession>Q7D6S9</accession>